<organismHost>
    <name type="scientific">Escherichia coli</name>
    <dbReference type="NCBI Taxonomy" id="562"/>
</organismHost>
<sequence length="79" mass="9153">MNPESKLSQRIAEERAKFFQNMKHNGIEDEVFLNWFWNNKYAACEGALSLSVAMMYEGWKGAKKFSLRASAFLDNKILT</sequence>
<gene>
    <name type="primary">y04C</name>
    <name type="synonym">55.3</name>
</gene>
<proteinExistence type="predicted"/>
<organism>
    <name type="scientific">Enterobacteria phage T4</name>
    <name type="common">Bacteriophage T4</name>
    <dbReference type="NCBI Taxonomy" id="10665"/>
    <lineage>
        <taxon>Viruses</taxon>
        <taxon>Duplodnaviria</taxon>
        <taxon>Heunggongvirae</taxon>
        <taxon>Uroviricota</taxon>
        <taxon>Caudoviricetes</taxon>
        <taxon>Straboviridae</taxon>
        <taxon>Tevenvirinae</taxon>
        <taxon>Tequatrovirus</taxon>
    </lineage>
</organism>
<feature type="chain" id="PRO_0000165106" description="Uncharacterized 9.2 kDa protein in Gp55-nrdG intergenic region">
    <location>
        <begin position="1"/>
        <end position="79"/>
    </location>
</feature>
<name>Y04C_BPT4</name>
<protein>
    <recommendedName>
        <fullName>Uncharacterized 9.2 kDa protein in Gp55-nrdG intergenic region</fullName>
    </recommendedName>
</protein>
<keyword id="KW-1185">Reference proteome</keyword>
<reference key="1">
    <citation type="journal article" date="1987" name="Nucleic Acids Res.">
        <title>Nucleotide sequence and primary structures of gene products coded for by the T4 genome between map positions 48.266 kb and 39.166 kb.</title>
        <authorList>
            <person name="Tomaschewski J."/>
            <person name="Rueger W."/>
        </authorList>
    </citation>
    <scope>NUCLEOTIDE SEQUENCE [GENOMIC DNA]</scope>
    <source>
        <strain>C</strain>
    </source>
</reference>
<reference key="2">
    <citation type="journal article" date="2003" name="Microbiol. Mol. Biol. Rev.">
        <title>Bacteriophage T4 genome.</title>
        <authorList>
            <person name="Miller E.S."/>
            <person name="Kutter E."/>
            <person name="Mosig G."/>
            <person name="Arisaka F."/>
            <person name="Kunisawa T."/>
            <person name="Ruger W."/>
        </authorList>
    </citation>
    <scope>NUCLEOTIDE SEQUENCE [LARGE SCALE GENOMIC DNA]</scope>
</reference>
<accession>P07081</accession>
<dbReference type="EMBL" id="Y00122">
    <property type="protein sequence ID" value="CAA68318.1"/>
    <property type="molecule type" value="Genomic_DNA"/>
</dbReference>
<dbReference type="EMBL" id="AF158101">
    <property type="protein sequence ID" value="AAD42494.1"/>
    <property type="molecule type" value="Genomic_DNA"/>
</dbReference>
<dbReference type="PIR" id="D30292">
    <property type="entry name" value="ZEBPT9"/>
</dbReference>
<dbReference type="RefSeq" id="NP_049682.1">
    <property type="nucleotide sequence ID" value="NC_000866.4"/>
</dbReference>
<dbReference type="GeneID" id="1258805"/>
<dbReference type="KEGG" id="vg:1258805"/>
<dbReference type="OrthoDB" id="22011at10239"/>
<dbReference type="Proteomes" id="UP000009087">
    <property type="component" value="Segment"/>
</dbReference>
<dbReference type="InterPro" id="IPR020156">
    <property type="entry name" value="DUF5490"/>
</dbReference>
<dbReference type="Pfam" id="PF17593">
    <property type="entry name" value="DUF5490"/>
    <property type="match status" value="1"/>
</dbReference>